<keyword id="KW-0963">Cytoplasm</keyword>
<keyword id="KW-0255">Endonuclease</keyword>
<keyword id="KW-0378">Hydrolase</keyword>
<keyword id="KW-0464">Manganese</keyword>
<keyword id="KW-0479">Metal-binding</keyword>
<keyword id="KW-0540">Nuclease</keyword>
<keyword id="KW-1185">Reference proteome</keyword>
<comment type="function">
    <text evidence="1">Endonuclease that specifically degrades the RNA of RNA-DNA hybrids.</text>
</comment>
<comment type="catalytic activity">
    <reaction evidence="1">
        <text>Endonucleolytic cleavage to 5'-phosphomonoester.</text>
        <dbReference type="EC" id="3.1.26.4"/>
    </reaction>
</comment>
<comment type="cofactor">
    <cofactor evidence="1">
        <name>Mn(2+)</name>
        <dbReference type="ChEBI" id="CHEBI:29035"/>
    </cofactor>
    <cofactor evidence="1">
        <name>Mg(2+)</name>
        <dbReference type="ChEBI" id="CHEBI:18420"/>
    </cofactor>
    <text evidence="1">Manganese or magnesium. Binds 1 divalent metal ion per monomer in the absence of substrate. May bind a second metal ion after substrate binding.</text>
</comment>
<comment type="subcellular location">
    <subcellularLocation>
        <location evidence="1">Cytoplasm</location>
    </subcellularLocation>
</comment>
<comment type="similarity">
    <text evidence="1">Belongs to the RNase HII family.</text>
</comment>
<evidence type="ECO:0000255" key="1">
    <source>
        <dbReference type="HAMAP-Rule" id="MF_00052"/>
    </source>
</evidence>
<evidence type="ECO:0000255" key="2">
    <source>
        <dbReference type="PROSITE-ProRule" id="PRU01319"/>
    </source>
</evidence>
<accession>Q2YB96</accession>
<name>RNH2_NITMU</name>
<feature type="chain" id="PRO_0000235742" description="Ribonuclease HII">
    <location>
        <begin position="1"/>
        <end position="199"/>
    </location>
</feature>
<feature type="domain" description="RNase H type-2" evidence="2">
    <location>
        <begin position="7"/>
        <end position="196"/>
    </location>
</feature>
<feature type="binding site" evidence="1">
    <location>
        <position position="13"/>
    </location>
    <ligand>
        <name>a divalent metal cation</name>
        <dbReference type="ChEBI" id="CHEBI:60240"/>
    </ligand>
</feature>
<feature type="binding site" evidence="1">
    <location>
        <position position="14"/>
    </location>
    <ligand>
        <name>a divalent metal cation</name>
        <dbReference type="ChEBI" id="CHEBI:60240"/>
    </ligand>
</feature>
<feature type="binding site" evidence="1">
    <location>
        <position position="105"/>
    </location>
    <ligand>
        <name>a divalent metal cation</name>
        <dbReference type="ChEBI" id="CHEBI:60240"/>
    </ligand>
</feature>
<organism>
    <name type="scientific">Nitrosospira multiformis (strain ATCC 25196 / NCIMB 11849 / C 71)</name>
    <dbReference type="NCBI Taxonomy" id="323848"/>
    <lineage>
        <taxon>Bacteria</taxon>
        <taxon>Pseudomonadati</taxon>
        <taxon>Pseudomonadota</taxon>
        <taxon>Betaproteobacteria</taxon>
        <taxon>Nitrosomonadales</taxon>
        <taxon>Nitrosomonadaceae</taxon>
        <taxon>Nitrosospira</taxon>
    </lineage>
</organism>
<sequence length="199" mass="21615">MCSNEYPWVCGVDEAGRGPLAGPVFAACVILDPASPIDGLADSKTLTEGKRNSLTLAIKAYSIAWAIGFASVREIDRLNILQASLLAMKRAIGKLPVTPARVLVDGNHSPRLKFPVTTIVRGDSLVPEISAASILAKTARDAEMMALHRRFPRYGFDQHKGYSTEQHLAALKIHGVSIVHRRSFAPVRELMANEKDAES</sequence>
<dbReference type="EC" id="3.1.26.4" evidence="1"/>
<dbReference type="EMBL" id="CP000103">
    <property type="protein sequence ID" value="ABB73975.1"/>
    <property type="molecule type" value="Genomic_DNA"/>
</dbReference>
<dbReference type="RefSeq" id="WP_011380025.1">
    <property type="nucleotide sequence ID" value="NC_007614.1"/>
</dbReference>
<dbReference type="SMR" id="Q2YB96"/>
<dbReference type="STRING" id="323848.Nmul_A0668"/>
<dbReference type="KEGG" id="nmu:Nmul_A0668"/>
<dbReference type="eggNOG" id="COG0164">
    <property type="taxonomic scope" value="Bacteria"/>
</dbReference>
<dbReference type="HOGENOM" id="CLU_036532_3_2_4"/>
<dbReference type="OrthoDB" id="9803420at2"/>
<dbReference type="Proteomes" id="UP000002718">
    <property type="component" value="Chromosome"/>
</dbReference>
<dbReference type="GO" id="GO:0005737">
    <property type="term" value="C:cytoplasm"/>
    <property type="evidence" value="ECO:0007669"/>
    <property type="project" value="UniProtKB-SubCell"/>
</dbReference>
<dbReference type="GO" id="GO:0032299">
    <property type="term" value="C:ribonuclease H2 complex"/>
    <property type="evidence" value="ECO:0007669"/>
    <property type="project" value="TreeGrafter"/>
</dbReference>
<dbReference type="GO" id="GO:0030145">
    <property type="term" value="F:manganese ion binding"/>
    <property type="evidence" value="ECO:0007669"/>
    <property type="project" value="UniProtKB-UniRule"/>
</dbReference>
<dbReference type="GO" id="GO:0003723">
    <property type="term" value="F:RNA binding"/>
    <property type="evidence" value="ECO:0007669"/>
    <property type="project" value="InterPro"/>
</dbReference>
<dbReference type="GO" id="GO:0004523">
    <property type="term" value="F:RNA-DNA hybrid ribonuclease activity"/>
    <property type="evidence" value="ECO:0007669"/>
    <property type="project" value="UniProtKB-UniRule"/>
</dbReference>
<dbReference type="GO" id="GO:0043137">
    <property type="term" value="P:DNA replication, removal of RNA primer"/>
    <property type="evidence" value="ECO:0007669"/>
    <property type="project" value="TreeGrafter"/>
</dbReference>
<dbReference type="GO" id="GO:0006298">
    <property type="term" value="P:mismatch repair"/>
    <property type="evidence" value="ECO:0007669"/>
    <property type="project" value="TreeGrafter"/>
</dbReference>
<dbReference type="CDD" id="cd07182">
    <property type="entry name" value="RNase_HII_bacteria_HII_like"/>
    <property type="match status" value="1"/>
</dbReference>
<dbReference type="FunFam" id="3.30.420.10:FF:000006">
    <property type="entry name" value="Ribonuclease HII"/>
    <property type="match status" value="1"/>
</dbReference>
<dbReference type="Gene3D" id="3.30.420.10">
    <property type="entry name" value="Ribonuclease H-like superfamily/Ribonuclease H"/>
    <property type="match status" value="1"/>
</dbReference>
<dbReference type="HAMAP" id="MF_00052_B">
    <property type="entry name" value="RNase_HII_B"/>
    <property type="match status" value="1"/>
</dbReference>
<dbReference type="InterPro" id="IPR022898">
    <property type="entry name" value="RNase_HII"/>
</dbReference>
<dbReference type="InterPro" id="IPR001352">
    <property type="entry name" value="RNase_HII/HIII"/>
</dbReference>
<dbReference type="InterPro" id="IPR024567">
    <property type="entry name" value="RNase_HII/HIII_dom"/>
</dbReference>
<dbReference type="InterPro" id="IPR012337">
    <property type="entry name" value="RNaseH-like_sf"/>
</dbReference>
<dbReference type="InterPro" id="IPR036397">
    <property type="entry name" value="RNaseH_sf"/>
</dbReference>
<dbReference type="NCBIfam" id="NF000595">
    <property type="entry name" value="PRK00015.1-3"/>
    <property type="match status" value="1"/>
</dbReference>
<dbReference type="NCBIfam" id="NF000596">
    <property type="entry name" value="PRK00015.1-4"/>
    <property type="match status" value="1"/>
</dbReference>
<dbReference type="PANTHER" id="PTHR10954">
    <property type="entry name" value="RIBONUCLEASE H2 SUBUNIT A"/>
    <property type="match status" value="1"/>
</dbReference>
<dbReference type="PANTHER" id="PTHR10954:SF18">
    <property type="entry name" value="RIBONUCLEASE HII"/>
    <property type="match status" value="1"/>
</dbReference>
<dbReference type="Pfam" id="PF01351">
    <property type="entry name" value="RNase_HII"/>
    <property type="match status" value="1"/>
</dbReference>
<dbReference type="SUPFAM" id="SSF53098">
    <property type="entry name" value="Ribonuclease H-like"/>
    <property type="match status" value="1"/>
</dbReference>
<dbReference type="PROSITE" id="PS51975">
    <property type="entry name" value="RNASE_H_2"/>
    <property type="match status" value="1"/>
</dbReference>
<gene>
    <name evidence="1" type="primary">rnhB</name>
    <name type="ordered locus">Nmul_A0668</name>
</gene>
<proteinExistence type="inferred from homology"/>
<reference key="1">
    <citation type="submission" date="2005-08" db="EMBL/GenBank/DDBJ databases">
        <title>Complete sequence of chromosome 1 of Nitrosospira multiformis ATCC 25196.</title>
        <authorList>
            <person name="Copeland A."/>
            <person name="Lucas S."/>
            <person name="Lapidus A."/>
            <person name="Barry K."/>
            <person name="Detter J.C."/>
            <person name="Glavina T."/>
            <person name="Hammon N."/>
            <person name="Israni S."/>
            <person name="Pitluck S."/>
            <person name="Chain P."/>
            <person name="Malfatti S."/>
            <person name="Shin M."/>
            <person name="Vergez L."/>
            <person name="Schmutz J."/>
            <person name="Larimer F."/>
            <person name="Land M."/>
            <person name="Hauser L."/>
            <person name="Kyrpides N."/>
            <person name="Lykidis A."/>
            <person name="Richardson P."/>
        </authorList>
    </citation>
    <scope>NUCLEOTIDE SEQUENCE [LARGE SCALE GENOMIC DNA]</scope>
    <source>
        <strain>ATCC 25196 / NCIMB 11849 / C 71</strain>
    </source>
</reference>
<protein>
    <recommendedName>
        <fullName evidence="1">Ribonuclease HII</fullName>
        <shortName evidence="1">RNase HII</shortName>
        <ecNumber evidence="1">3.1.26.4</ecNumber>
    </recommendedName>
</protein>